<sequence length="399" mass="45156">MDVLYSLSKTLKDARDKIVEGTLYSNVSDLIQQFNQMVITMNGNEFQTGGIGNLPIRNWNFDFGLLGTTLLNLDANYVETARNTIDYFVDFVDNVCMDEMVRESQRNGIAPQSDSLRKLSGVKFKRINFDNSSEYIENWNLQNRRQRTGFTFHKPNIFPYSASFTLNRSQPAHDNLMGTMWLNAGSEIQVAGFDYSCAINAPANTQQFEHIVQLRRVLTTATITLLPDAERFSFPRVINSADGTTTWYFNPVIFRPNNVEIEFLLNGQIINNYQARFGTIIARNFDTIRLSFQLMRPPPQNMTPAVAALFPNAPPFEHHATVGLTLRIESAICESVLADASETMLANVTSVRQEYAVPVGPVFPPGMNWTDLITNYSPSREDNLQRVFTVASIRSMLIK</sequence>
<dbReference type="EMBL" id="D82971">
    <property type="protein sequence ID" value="BAA11659.1"/>
    <property type="molecule type" value="Genomic_RNA"/>
</dbReference>
<dbReference type="SMR" id="Q86345"/>
<dbReference type="GO" id="GO:0019031">
    <property type="term" value="C:viral envelope"/>
    <property type="evidence" value="ECO:0007669"/>
    <property type="project" value="UniProtKB-UniRule"/>
</dbReference>
<dbReference type="GO" id="GO:0039626">
    <property type="term" value="C:viral intermediate capsid"/>
    <property type="evidence" value="ECO:0007669"/>
    <property type="project" value="UniProtKB-UniRule"/>
</dbReference>
<dbReference type="GO" id="GO:0046789">
    <property type="term" value="F:host cell surface receptor binding"/>
    <property type="evidence" value="ECO:0007669"/>
    <property type="project" value="UniProtKB-UniRule"/>
</dbReference>
<dbReference type="GO" id="GO:0046872">
    <property type="term" value="F:metal ion binding"/>
    <property type="evidence" value="ECO:0007669"/>
    <property type="project" value="UniProtKB-UniRule"/>
</dbReference>
<dbReference type="GO" id="GO:0005198">
    <property type="term" value="F:structural molecule activity"/>
    <property type="evidence" value="ECO:0007669"/>
    <property type="project" value="UniProtKB-UniRule"/>
</dbReference>
<dbReference type="GO" id="GO:0019064">
    <property type="term" value="P:fusion of virus membrane with host plasma membrane"/>
    <property type="evidence" value="ECO:0007669"/>
    <property type="project" value="UniProtKB-UniRule"/>
</dbReference>
<dbReference type="FunFam" id="2.60.120.170:FF:000001">
    <property type="entry name" value="Intermediate capsid protein VP6"/>
    <property type="match status" value="1"/>
</dbReference>
<dbReference type="Gene3D" id="2.60.120.170">
    <property type="match status" value="1"/>
</dbReference>
<dbReference type="Gene3D" id="1.10.1350.10">
    <property type="entry name" value="Viral capsid alpha domain"/>
    <property type="match status" value="1"/>
</dbReference>
<dbReference type="HAMAP" id="MF_04126">
    <property type="entry name" value="Rota_VP6"/>
    <property type="match status" value="1"/>
</dbReference>
<dbReference type="HAMAP" id="MF_04129">
    <property type="entry name" value="Rota_VP6_A"/>
    <property type="match status" value="1"/>
</dbReference>
<dbReference type="InterPro" id="IPR008980">
    <property type="entry name" value="Capsid_hemagglutn"/>
</dbReference>
<dbReference type="InterPro" id="IPR001385">
    <property type="entry name" value="Rotavirus_A/C_VP6"/>
</dbReference>
<dbReference type="InterPro" id="IPR008935">
    <property type="entry name" value="Virus_capsid_a-hlx_vir"/>
</dbReference>
<dbReference type="Pfam" id="PF00980">
    <property type="entry name" value="Rota_Capsid_VP6"/>
    <property type="match status" value="1"/>
</dbReference>
<dbReference type="SUPFAM" id="SSF48345">
    <property type="entry name" value="A virus capsid protein alpha-helical domain"/>
    <property type="match status" value="1"/>
</dbReference>
<dbReference type="SUPFAM" id="SSF49818">
    <property type="entry name" value="Viral protein domain"/>
    <property type="match status" value="1"/>
</dbReference>
<organismHost>
    <name type="scientific">Equus caballus</name>
    <name type="common">Horse</name>
    <dbReference type="NCBI Taxonomy" id="9796"/>
</organismHost>
<protein>
    <recommendedName>
        <fullName evidence="1">Intermediate capsid protein VP6</fullName>
    </recommendedName>
</protein>
<keyword id="KW-0106">Calcium</keyword>
<keyword id="KW-0167">Capsid protein</keyword>
<keyword id="KW-1154">Intermediate capsid protein</keyword>
<keyword id="KW-0479">Metal-binding</keyword>
<keyword id="KW-0832">Ubl conjugation</keyword>
<keyword id="KW-0946">Virion</keyword>
<keyword id="KW-0862">Zinc</keyword>
<feature type="chain" id="PRO_0000368163" description="Intermediate capsid protein VP6">
    <location>
        <begin position="1"/>
        <end position="399"/>
    </location>
</feature>
<feature type="region of interest" description="Interaction with the inner capsid protein VP2" evidence="1">
    <location>
        <begin position="62"/>
        <end position="73"/>
    </location>
</feature>
<feature type="binding site" evidence="1">
    <location>
        <position position="153"/>
    </location>
    <ligand>
        <name>Zn(2+)</name>
        <dbReference type="ChEBI" id="CHEBI:29105"/>
        <note>ligand shared between all trimeric partners</note>
    </ligand>
</feature>
<feature type="binding site" evidence="1">
    <location>
        <position position="266"/>
    </location>
    <ligand>
        <name>Ca(2+)</name>
        <dbReference type="ChEBI" id="CHEBI:29108"/>
    </ligand>
</feature>
<feature type="binding site" evidence="1">
    <location>
        <position position="286"/>
    </location>
    <ligand>
        <name>Ca(2+)</name>
        <dbReference type="ChEBI" id="CHEBI:29108"/>
    </ligand>
</feature>
<accession>Q86345</accession>
<comment type="function">
    <text evidence="1">Intermediate capsid protein that self assembles to form an icosahedral capsid with a T=13 symmetry, which consists of 230 trimers of VP6, with channels at each of its five-fold vertices. This capsid constitutes the middle concentric layer of the viral mature particle. The innermost VP2 capsid and the intermediate VP6 capsid remain intact following cell entry to protect the dsRNA from degradation and to prevent unfavorable antiviral responses in the host cell during all the replication cycle of the virus. Nascent transcripts are transcribed within the structural confines of this double-layered particle (DLP) and are extruded through the channels at the five-fold axes. VP6 is required for the transcription activity of the DLP.</text>
</comment>
<comment type="subunit">
    <text evidence="1">Homotrimer. Interacts with the inner capsid protein VP2. Interacts with the outer capsid glycoprotein VP7. Interacts with the outer capsid protein VP5*.</text>
</comment>
<comment type="subcellular location">
    <subcellularLocation>
        <location evidence="1">Virion</location>
    </subcellularLocation>
    <text evidence="1">Component of the intermediate capsid. Also found in spherical cytoplasmic structures, called virus factories, that appear early after infection and are the site of viral replication and packaging.</text>
</comment>
<comment type="PTM">
    <text evidence="1">The N-terminus is blocked.</text>
</comment>
<comment type="PTM">
    <text evidence="1">Sumoylated with SUMO1 and SUMO2. Sumoylation of viral proteins seems to have a positive role on viral replication.</text>
</comment>
<comment type="miscellaneous">
    <text evidence="1">The VP6 trimer contains a zinc ion located at the center of the molecule. The zinc ion is not essential for either trimerization or transcription activity of the DLP. Zinc-depleted VP6 has an increased sensitivity to proteases.</text>
</comment>
<comment type="similarity">
    <text evidence="1">Belongs to the rotavirus VP6 family.</text>
</comment>
<organism>
    <name type="scientific">Rotavirus A (isolate RVA/Equine/United States/FI-23/1981/G14P4[12])</name>
    <name type="common">RV-A</name>
    <name type="synonym">Rotavirus A (strain FI23)</name>
    <dbReference type="NCBI Taxonomy" id="36443"/>
    <lineage>
        <taxon>Viruses</taxon>
        <taxon>Riboviria</taxon>
        <taxon>Orthornavirae</taxon>
        <taxon>Duplornaviricota</taxon>
        <taxon>Resentoviricetes</taxon>
        <taxon>Reovirales</taxon>
        <taxon>Sedoreoviridae</taxon>
        <taxon>Rotavirus</taxon>
        <taxon>Rotavirus A</taxon>
    </lineage>
</organism>
<name>VP6_ROTE2</name>
<evidence type="ECO:0000255" key="1">
    <source>
        <dbReference type="HAMAP-Rule" id="MF_04129"/>
    </source>
</evidence>
<proteinExistence type="inferred from homology"/>
<reference key="1">
    <citation type="submission" date="1996-01" db="EMBL/GenBank/DDBJ databases">
        <title>Comparative sequence analysis of the VP6 gene of equine rotaviruses.</title>
        <authorList>
            <person name="Minamoto N."/>
        </authorList>
    </citation>
    <scope>NUCLEOTIDE SEQUENCE [GENOMIC RNA]</scope>
</reference>